<reference key="1">
    <citation type="journal article" date="2000" name="Nature">
        <title>Complete genome sequence of Pseudomonas aeruginosa PAO1, an opportunistic pathogen.</title>
        <authorList>
            <person name="Stover C.K."/>
            <person name="Pham X.-Q.T."/>
            <person name="Erwin A.L."/>
            <person name="Mizoguchi S.D."/>
            <person name="Warrener P."/>
            <person name="Hickey M.J."/>
            <person name="Brinkman F.S.L."/>
            <person name="Hufnagle W.O."/>
            <person name="Kowalik D.J."/>
            <person name="Lagrou M."/>
            <person name="Garber R.L."/>
            <person name="Goltry L."/>
            <person name="Tolentino E."/>
            <person name="Westbrock-Wadman S."/>
            <person name="Yuan Y."/>
            <person name="Brody L.L."/>
            <person name="Coulter S.N."/>
            <person name="Folger K.R."/>
            <person name="Kas A."/>
            <person name="Larbig K."/>
            <person name="Lim R.M."/>
            <person name="Smith K.A."/>
            <person name="Spencer D.H."/>
            <person name="Wong G.K.-S."/>
            <person name="Wu Z."/>
            <person name="Paulsen I.T."/>
            <person name="Reizer J."/>
            <person name="Saier M.H. Jr."/>
            <person name="Hancock R.E.W."/>
            <person name="Lory S."/>
            <person name="Olson M.V."/>
        </authorList>
    </citation>
    <scope>NUCLEOTIDE SEQUENCE [LARGE SCALE GENOMIC DNA]</scope>
    <source>
        <strain>ATCC 15692 / DSM 22644 / CIP 104116 / JCM 14847 / LMG 12228 / 1C / PRS 101 / PAO1</strain>
    </source>
</reference>
<reference key="2">
    <citation type="journal article" date="2015" name="MBio">
        <title>Internalization of Pseudomonas aeruginosa Strain PAO1 into Epithelial Cells Is Promoted by Interaction of a T6SS Effector with the Microtubule Network.</title>
        <authorList>
            <person name="Sana T.G."/>
            <person name="Baumann C."/>
            <person name="Merdes A."/>
            <person name="Soscia C."/>
            <person name="Rattei T."/>
            <person name="Hachani A."/>
            <person name="Jones C."/>
            <person name="Bennett K.L."/>
            <person name="Filloux A."/>
            <person name="Superti-Furga G."/>
            <person name="Voulhoux R."/>
            <person name="Bleves S."/>
        </authorList>
    </citation>
    <scope>FUNCTION</scope>
    <scope>DISRUPTION PHENOTYPE</scope>
</reference>
<sequence>MRQRDLKFTFVVGEGKLAFDVVEFELEEALCEPFRLNLKLASDKNAIDFRQVLDQPGTFTLWQDGRPARYVHGIVSHFTQGSSGFRRTRYELLLEPQLARLELCCNWRIFQEKSVPEILQALLKEHRVLDYEQRIYHEHLPREYCVQAGDSDHYLHDRLAFEEGLVYYFRFDEHRHTLVCSDRLYVQERIAGGPVLFSAQPEGDNPQPVLHSFRYSENVRTARQTQRDYSFKRPTYDQEHHLAGEALEHQGSSYERYDYPGRYKRSGAGRPFSESRLRGHRRDARVASVSGDDPRLIPGHAFALEGHPRADFNAWWRPVRVVHRGTQYAGQEEESADAPLGVSYDLRAELVPEDVEWRPAPLPRPRIDGPQIATVVGPAGEEIHCDEWGRVKVQFPWDREGRHDEFSTCWIRVAQNWAGADWGHMAIPRIGQEVIVDYLDGDCDQPIVTGRTYRATNRPPYALPDHKILSTIKSKEYKGSRANELRIDDTTAQISAALMSDHGASALHLGYLTHPRPEGGKPRGEGFELRTDEHGAVRAAKGLLLSTEEQLRAGAGHLDRGVVVQVLEAALKLARELGDYAGEHQGVGHDAAPQQTLQEAVRDLGHGANDESGKSNGGKPAIALSGPAGIAAATPASLTLAAGEHVDSVARQNQQVTAGQKVVINAGSDIGLFAQGGELRQITHQGPMLLQAQKNDIRLEAEQSVEVSASQQHVLVTAKEHITLMCGGAYLTLKGGNIELGMPGNFVVKAAKHSHVGPAHASTSFNAWDSTPFDDRYVLRDEATLEPLPNIAVEVIRGDGGVVKLMTDSQGRLPKQQHLAMDPVQIRILGKGSHNSDTESNT</sequence>
<name>VGR2A_PSEAE</name>
<accession>Q9I3K1</accession>
<gene>
    <name evidence="3" type="primary">vgrG2a</name>
    <name type="ordered locus">PA1511</name>
</gene>
<protein>
    <recommendedName>
        <fullName evidence="3">Type VI secretion system spike protein VgrG2a</fullName>
    </recommendedName>
</protein>
<organism>
    <name type="scientific">Pseudomonas aeruginosa (strain ATCC 15692 / DSM 22644 / CIP 104116 / JCM 14847 / LMG 12228 / 1C / PRS 101 / PAO1)</name>
    <dbReference type="NCBI Taxonomy" id="208964"/>
    <lineage>
        <taxon>Bacteria</taxon>
        <taxon>Pseudomonadati</taxon>
        <taxon>Pseudomonadota</taxon>
        <taxon>Gammaproteobacteria</taxon>
        <taxon>Pseudomonadales</taxon>
        <taxon>Pseudomonadaceae</taxon>
        <taxon>Pseudomonas</taxon>
    </lineage>
</organism>
<keyword id="KW-1185">Reference proteome</keyword>
<dbReference type="EMBL" id="AE004091">
    <property type="protein sequence ID" value="AAG04900.1"/>
    <property type="molecule type" value="Genomic_DNA"/>
</dbReference>
<dbReference type="PIR" id="C83458">
    <property type="entry name" value="C83458"/>
</dbReference>
<dbReference type="RefSeq" id="NP_250202.1">
    <property type="nucleotide sequence ID" value="NC_002516.2"/>
</dbReference>
<dbReference type="RefSeq" id="WP_003147414.1">
    <property type="nucleotide sequence ID" value="NZ_CP129519.1"/>
</dbReference>
<dbReference type="SMR" id="Q9I3K1"/>
<dbReference type="IntAct" id="Q9I3K1">
    <property type="interactions" value="1"/>
</dbReference>
<dbReference type="MINT" id="Q9I3K1"/>
<dbReference type="STRING" id="208964.PA1511"/>
<dbReference type="PaxDb" id="208964-PA1511"/>
<dbReference type="GeneID" id="883127"/>
<dbReference type="KEGG" id="pae:PA1511"/>
<dbReference type="PATRIC" id="fig|208964.12.peg.1563"/>
<dbReference type="PseudoCAP" id="PA1511"/>
<dbReference type="HOGENOM" id="CLU_004121_1_4_6"/>
<dbReference type="InParanoid" id="Q9I3K1"/>
<dbReference type="OrthoDB" id="9762420at2"/>
<dbReference type="PhylomeDB" id="Q9I3K1"/>
<dbReference type="BioCyc" id="PAER208964:G1FZ6-1538-MONOMER"/>
<dbReference type="Proteomes" id="UP000002438">
    <property type="component" value="Chromosome"/>
</dbReference>
<dbReference type="GO" id="GO:0033104">
    <property type="term" value="C:type VI protein secretion system complex"/>
    <property type="evidence" value="ECO:0000317"/>
    <property type="project" value="PseudoCAP"/>
</dbReference>
<dbReference type="GO" id="GO:0033103">
    <property type="term" value="P:protein secretion by the type VI secretion system"/>
    <property type="evidence" value="ECO:0000317"/>
    <property type="project" value="PseudoCAP"/>
</dbReference>
<dbReference type="Gene3D" id="2.30.110.50">
    <property type="match status" value="1"/>
</dbReference>
<dbReference type="Gene3D" id="4.10.220.110">
    <property type="match status" value="1"/>
</dbReference>
<dbReference type="Gene3D" id="3.55.50.10">
    <property type="entry name" value="Baseplate protein-like domains"/>
    <property type="match status" value="1"/>
</dbReference>
<dbReference type="Gene3D" id="2.40.50.230">
    <property type="entry name" value="Gp5 N-terminal domain"/>
    <property type="match status" value="1"/>
</dbReference>
<dbReference type="InterPro" id="IPR006531">
    <property type="entry name" value="Gp5/Vgr_OB"/>
</dbReference>
<dbReference type="InterPro" id="IPR028244">
    <property type="entry name" value="T6SS_Rhs_Vgr_dom"/>
</dbReference>
<dbReference type="InterPro" id="IPR017847">
    <property type="entry name" value="T6SS_RhsGE_Vgr_subset"/>
</dbReference>
<dbReference type="InterPro" id="IPR006533">
    <property type="entry name" value="T6SS_Vgr_RhsGE"/>
</dbReference>
<dbReference type="InterPro" id="IPR050708">
    <property type="entry name" value="T6SS_VgrG/RHS"/>
</dbReference>
<dbReference type="InterPro" id="IPR037026">
    <property type="entry name" value="Vgr_OB-fold_dom_sf"/>
</dbReference>
<dbReference type="InterPro" id="IPR018769">
    <property type="entry name" value="VgrG2_DUF2345"/>
</dbReference>
<dbReference type="NCBIfam" id="TIGR01646">
    <property type="entry name" value="vgr_GE"/>
    <property type="match status" value="1"/>
</dbReference>
<dbReference type="NCBIfam" id="TIGR03361">
    <property type="entry name" value="VI_Rhs_Vgr"/>
    <property type="match status" value="1"/>
</dbReference>
<dbReference type="PANTHER" id="PTHR32305">
    <property type="match status" value="1"/>
</dbReference>
<dbReference type="PANTHER" id="PTHR32305:SF11">
    <property type="entry name" value="TYPE VI SECRETION SYSTEM SPIKE PROTEIN VGRG3"/>
    <property type="match status" value="1"/>
</dbReference>
<dbReference type="Pfam" id="PF10106">
    <property type="entry name" value="DUF2345"/>
    <property type="match status" value="1"/>
</dbReference>
<dbReference type="Pfam" id="PF04717">
    <property type="entry name" value="Phage_base_V"/>
    <property type="match status" value="1"/>
</dbReference>
<dbReference type="Pfam" id="PF05954">
    <property type="entry name" value="Phage_GPD"/>
    <property type="match status" value="1"/>
</dbReference>
<dbReference type="Pfam" id="PF13296">
    <property type="entry name" value="T6SS_Vgr"/>
    <property type="match status" value="1"/>
</dbReference>
<dbReference type="SUPFAM" id="SSF69255">
    <property type="entry name" value="gp5 N-terminal domain-like"/>
    <property type="match status" value="1"/>
</dbReference>
<dbReference type="SUPFAM" id="SSF69349">
    <property type="entry name" value="Phage fibre proteins"/>
    <property type="match status" value="1"/>
</dbReference>
<dbReference type="SUPFAM" id="SSF69279">
    <property type="entry name" value="Phage tail proteins"/>
    <property type="match status" value="2"/>
</dbReference>
<evidence type="ECO:0000256" key="1">
    <source>
        <dbReference type="SAM" id="MobiDB-lite"/>
    </source>
</evidence>
<evidence type="ECO:0000269" key="2">
    <source>
    </source>
</evidence>
<evidence type="ECO:0000303" key="3">
    <source>
    </source>
</evidence>
<evidence type="ECO:0000305" key="4"/>
<evidence type="ECO:0000305" key="5">
    <source>
    </source>
</evidence>
<feature type="chain" id="PRO_0000448914" description="Type VI secretion system spike protein VgrG2a">
    <location>
        <begin position="1"/>
        <end position="842"/>
    </location>
</feature>
<feature type="region of interest" description="Disordered" evidence="1">
    <location>
        <begin position="265"/>
        <end position="291"/>
    </location>
</feature>
<proteinExistence type="inferred from homology"/>
<comment type="function">
    <text evidence="2 5">Part of the H2 type VI secretion system (H2-T6SS) specialized secretion system, which delivers several virulence factors in both prokaryotic and eukaryotic cells during infection (PubMed:26037124). May form the spike at the tip of the elongating tube formed by haemolysin co-regulated protein 2a/Hcp2a. In turn, may allow the delivery of the Tle4 antibacterial toxin to target cells where it exerts its toxicity (Probable). Also promotes the release of VgrG2b toxin to the host cell (PubMed:26037124).</text>
</comment>
<comment type="disruption phenotype">
    <text evidence="2">Deletion leads to a 75% loss of internalization of P.aeruginosa into host cell.</text>
</comment>
<comment type="similarity">
    <text evidence="4">Belongs to the VgrG protein family.</text>
</comment>